<keyword id="KW-0687">Ribonucleoprotein</keyword>
<keyword id="KW-0689">Ribosomal protein</keyword>
<keyword id="KW-0694">RNA-binding</keyword>
<keyword id="KW-0699">rRNA-binding</keyword>
<proteinExistence type="inferred from homology"/>
<accession>Q3ZZQ5</accession>
<organism>
    <name type="scientific">Dehalococcoides mccartyi (strain CBDB1)</name>
    <dbReference type="NCBI Taxonomy" id="255470"/>
    <lineage>
        <taxon>Bacteria</taxon>
        <taxon>Bacillati</taxon>
        <taxon>Chloroflexota</taxon>
        <taxon>Dehalococcoidia</taxon>
        <taxon>Dehalococcoidales</taxon>
        <taxon>Dehalococcoidaceae</taxon>
        <taxon>Dehalococcoides</taxon>
    </lineage>
</organism>
<name>RL15_DEHMC</name>
<dbReference type="EMBL" id="AJ965256">
    <property type="protein sequence ID" value="CAI82658.1"/>
    <property type="molecule type" value="Genomic_DNA"/>
</dbReference>
<dbReference type="RefSeq" id="WP_011309013.1">
    <property type="nucleotide sequence ID" value="NC_007356.1"/>
</dbReference>
<dbReference type="SMR" id="Q3ZZQ5"/>
<dbReference type="KEGG" id="deh:cbdbA457"/>
<dbReference type="HOGENOM" id="CLU_055188_4_2_0"/>
<dbReference type="Proteomes" id="UP000000433">
    <property type="component" value="Chromosome"/>
</dbReference>
<dbReference type="GO" id="GO:0022625">
    <property type="term" value="C:cytosolic large ribosomal subunit"/>
    <property type="evidence" value="ECO:0007669"/>
    <property type="project" value="TreeGrafter"/>
</dbReference>
<dbReference type="GO" id="GO:0019843">
    <property type="term" value="F:rRNA binding"/>
    <property type="evidence" value="ECO:0007669"/>
    <property type="project" value="UniProtKB-UniRule"/>
</dbReference>
<dbReference type="GO" id="GO:0003735">
    <property type="term" value="F:structural constituent of ribosome"/>
    <property type="evidence" value="ECO:0007669"/>
    <property type="project" value="InterPro"/>
</dbReference>
<dbReference type="GO" id="GO:0006412">
    <property type="term" value="P:translation"/>
    <property type="evidence" value="ECO:0007669"/>
    <property type="project" value="UniProtKB-UniRule"/>
</dbReference>
<dbReference type="Gene3D" id="3.100.10.10">
    <property type="match status" value="1"/>
</dbReference>
<dbReference type="HAMAP" id="MF_01341">
    <property type="entry name" value="Ribosomal_uL15"/>
    <property type="match status" value="1"/>
</dbReference>
<dbReference type="InterPro" id="IPR030878">
    <property type="entry name" value="Ribosomal_uL15"/>
</dbReference>
<dbReference type="InterPro" id="IPR021131">
    <property type="entry name" value="Ribosomal_uL15/eL18"/>
</dbReference>
<dbReference type="InterPro" id="IPR036227">
    <property type="entry name" value="Ribosomal_uL15/eL18_sf"/>
</dbReference>
<dbReference type="InterPro" id="IPR005749">
    <property type="entry name" value="Ribosomal_uL15_bac-type"/>
</dbReference>
<dbReference type="InterPro" id="IPR001196">
    <property type="entry name" value="Ribosomal_uL15_CS"/>
</dbReference>
<dbReference type="NCBIfam" id="TIGR01071">
    <property type="entry name" value="rplO_bact"/>
    <property type="match status" value="1"/>
</dbReference>
<dbReference type="PANTHER" id="PTHR12934">
    <property type="entry name" value="50S RIBOSOMAL PROTEIN L15"/>
    <property type="match status" value="1"/>
</dbReference>
<dbReference type="PANTHER" id="PTHR12934:SF11">
    <property type="entry name" value="LARGE RIBOSOMAL SUBUNIT PROTEIN UL15M"/>
    <property type="match status" value="1"/>
</dbReference>
<dbReference type="Pfam" id="PF00828">
    <property type="entry name" value="Ribosomal_L27A"/>
    <property type="match status" value="1"/>
</dbReference>
<dbReference type="SUPFAM" id="SSF52080">
    <property type="entry name" value="Ribosomal proteins L15p and L18e"/>
    <property type="match status" value="1"/>
</dbReference>
<dbReference type="PROSITE" id="PS00475">
    <property type="entry name" value="RIBOSOMAL_L15"/>
    <property type="match status" value="1"/>
</dbReference>
<sequence length="153" mass="16705">MRLHELSPAPGSRKDRKRVGRGDAGRGNYSGRGMKGQKARSGGATRPGFEGGQLPIYLRLPRKRGFFNPFRIKYAVVNIEQLNMFEAGTEVTPETLLAAGLIRNFVKPVKILSSGHIDRALEVSAHKFSQAAKAQIEAAGGKVQEIDYAAEIE</sequence>
<reference key="1">
    <citation type="journal article" date="2005" name="Nat. Biotechnol.">
        <title>Genome sequence of the chlorinated compound-respiring bacterium Dehalococcoides species strain CBDB1.</title>
        <authorList>
            <person name="Kube M."/>
            <person name="Beck A."/>
            <person name="Zinder S.H."/>
            <person name="Kuhl H."/>
            <person name="Reinhardt R."/>
            <person name="Adrian L."/>
        </authorList>
    </citation>
    <scope>NUCLEOTIDE SEQUENCE [LARGE SCALE GENOMIC DNA]</scope>
    <source>
        <strain>CBDB1</strain>
    </source>
</reference>
<evidence type="ECO:0000255" key="1">
    <source>
        <dbReference type="HAMAP-Rule" id="MF_01341"/>
    </source>
</evidence>
<evidence type="ECO:0000256" key="2">
    <source>
        <dbReference type="SAM" id="MobiDB-lite"/>
    </source>
</evidence>
<evidence type="ECO:0000305" key="3"/>
<gene>
    <name evidence="1" type="primary">rplO</name>
    <name type="ordered locus">cbdbA457</name>
</gene>
<feature type="chain" id="PRO_0000104715" description="Large ribosomal subunit protein uL15">
    <location>
        <begin position="1"/>
        <end position="153"/>
    </location>
</feature>
<feature type="region of interest" description="Disordered" evidence="2">
    <location>
        <begin position="1"/>
        <end position="47"/>
    </location>
</feature>
<protein>
    <recommendedName>
        <fullName evidence="1">Large ribosomal subunit protein uL15</fullName>
    </recommendedName>
    <alternativeName>
        <fullName evidence="3">50S ribosomal protein L15</fullName>
    </alternativeName>
</protein>
<comment type="function">
    <text evidence="1">Binds to the 23S rRNA.</text>
</comment>
<comment type="subunit">
    <text evidence="1">Part of the 50S ribosomal subunit.</text>
</comment>
<comment type="similarity">
    <text evidence="1">Belongs to the universal ribosomal protein uL15 family.</text>
</comment>